<protein>
    <recommendedName>
        <fullName>Capsid protein VP1</fullName>
        <shortName>CP</shortName>
    </recommendedName>
    <alternativeName>
        <fullName>Coat protein</fullName>
    </alternativeName>
    <alternativeName>
        <fullName>p59</fullName>
    </alternativeName>
    <component>
        <recommendedName>
            <fullName>Soluble capsid protein</fullName>
        </recommendedName>
        <alternativeName>
            <fullName>Protein 30k</fullName>
            <shortName>p30</shortName>
        </alternativeName>
    </component>
</protein>
<organism>
    <name type="scientific">Norovirus (strain Human/NoV/United States/Norwalk/1968/GI)</name>
    <name type="common">Hu/NV/NV/1968/US</name>
    <dbReference type="NCBI Taxonomy" id="524364"/>
    <lineage>
        <taxon>Viruses</taxon>
        <taxon>Riboviria</taxon>
        <taxon>Orthornavirae</taxon>
        <taxon>Pisuviricota</taxon>
        <taxon>Pisoniviricetes</taxon>
        <taxon>Picornavirales</taxon>
        <taxon>Caliciviridae</taxon>
        <taxon>Norovirus</taxon>
        <taxon>Norwalk virus</taxon>
    </lineage>
</organism>
<name>CAPSD_NVN68</name>
<organismHost>
    <name type="scientific">Homo sapiens</name>
    <name type="common">Human</name>
    <dbReference type="NCBI Taxonomy" id="9606"/>
</organismHost>
<accession>Q83884</accession>
<comment type="function">
    <molecule>Capsid protein VP1</molecule>
    <text evidence="3 4 5 7 10 11">Capsid protein self assembles to form an icosahedral capsid with a T=3 symmetry, about 38 nm in diameter, and consisting of 180 capsid proteins (PubMed:10514371). A smaller form of capsid with a diameter of 23 nm might be capsid proteins assembled as icosahedron with T=1 symmetry (PubMed:31182604, PubMed:9311906). The capsid encapsulates the genomic RNA and is decorated with VP2 proteins. Attaches virion to target cells by binding histo-blood group antigens (HBGAs) present on gastroduodenal epithelial cells (PubMed:12055602, PubMed:12825167, PubMed:16840313).</text>
</comment>
<comment type="function">
    <molecule>Soluble capsid protein</molecule>
    <text evidence="7">The soluble capsid protein may play a role in viral immunoevasion.</text>
</comment>
<comment type="subunit">
    <molecule>Capsid protein VP1</molecule>
    <text evidence="1 4 5 6 7 8 9 11">Homodimer (PubMed:16254337, PubMed:16840313, PubMed:18385236, PubMed:18599458). Homomultimer (PubMed:16254337, PubMed:9311906). Interacts with the minor capsid protein VP2 (By similarity). Interacts (via C-terminus) with host type I histo-blood group structures antigens at the surface of target cells (PubMed:12055602, PubMed:12825167, PubMed:16254337, PubMed:16840313).</text>
</comment>
<comment type="interaction">
    <interactant intactId="EBI-15713903">
        <id>Q83884</id>
    </interactant>
    <interactant intactId="EBI-15713903">
        <id>Q83884</id>
        <label>ORF2</label>
    </interactant>
    <organismsDiffer>false</organismsDiffer>
    <experiments>2</experiments>
</comment>
<comment type="subcellular location">
    <molecule>Capsid protein VP1</molecule>
    <subcellularLocation>
        <location>Virion</location>
    </subcellularLocation>
    <subcellularLocation>
        <location>Host cytoplasm</location>
    </subcellularLocation>
</comment>
<comment type="domain">
    <molecule>Capsid protein VP1</molecule>
    <text evidence="6">The shell domain (S domain) contains elements essential for the formation of the icosahedron (PubMed:16254337). The Protruding domain (P domain) is divided into sub-domains P1 and P2 (PubMed:16254337). P domain interacts in dimeric contacts that increase the stability of the capsid and form the protrusions on the virion (PubMed:16254337). A hypervariable region in P2 is thought to play an important role in receptor binding and immune reactivity (PubMed:16254337).</text>
</comment>
<comment type="PTM">
    <molecule>Capsid protein VP1</molecule>
    <text evidence="7">May be cleaved by host protease to generate soluble capsid protein. Assembled capsid cannot be cleaved.</text>
</comment>
<comment type="similarity">
    <text evidence="12">Belongs to the caliciviridae capsid protein family.</text>
</comment>
<evidence type="ECO:0000250" key="1">
    <source>
        <dbReference type="UniProtKB" id="P27406"/>
    </source>
</evidence>
<evidence type="ECO:0000256" key="2">
    <source>
        <dbReference type="SAM" id="MobiDB-lite"/>
    </source>
</evidence>
<evidence type="ECO:0000269" key="3">
    <source>
    </source>
</evidence>
<evidence type="ECO:0000269" key="4">
    <source>
    </source>
</evidence>
<evidence type="ECO:0000269" key="5">
    <source>
    </source>
</evidence>
<evidence type="ECO:0000269" key="6">
    <source>
    </source>
</evidence>
<evidence type="ECO:0000269" key="7">
    <source>
    </source>
</evidence>
<evidence type="ECO:0000269" key="8">
    <source>
    </source>
</evidence>
<evidence type="ECO:0000269" key="9">
    <source>
    </source>
</evidence>
<evidence type="ECO:0000269" key="10">
    <source>
    </source>
</evidence>
<evidence type="ECO:0000269" key="11">
    <source>
    </source>
</evidence>
<evidence type="ECO:0000305" key="12"/>
<evidence type="ECO:0007744" key="13">
    <source>
        <dbReference type="PDB" id="1IHM"/>
    </source>
</evidence>
<evidence type="ECO:0007744" key="14">
    <source>
        <dbReference type="PDB" id="2ZL5"/>
    </source>
</evidence>
<evidence type="ECO:0007744" key="15">
    <source>
        <dbReference type="PDB" id="2ZL6"/>
    </source>
</evidence>
<evidence type="ECO:0007744" key="16">
    <source>
        <dbReference type="PDB" id="2ZL7"/>
    </source>
</evidence>
<evidence type="ECO:0007744" key="17">
    <source>
        <dbReference type="PDB" id="3BY1"/>
    </source>
</evidence>
<evidence type="ECO:0007744" key="18">
    <source>
        <dbReference type="PDB" id="3BY2"/>
    </source>
</evidence>
<evidence type="ECO:0007744" key="19">
    <source>
        <dbReference type="PDB" id="3D26"/>
    </source>
</evidence>
<evidence type="ECO:0007744" key="20">
    <source>
        <dbReference type="PDB" id="5KW9"/>
    </source>
</evidence>
<evidence type="ECO:0007744" key="21">
    <source>
        <dbReference type="PDB" id="5N7M"/>
    </source>
</evidence>
<evidence type="ECO:0007744" key="22">
    <source>
        <dbReference type="PDB" id="6OUT"/>
    </source>
</evidence>
<evidence type="ECO:0007829" key="23">
    <source>
        <dbReference type="PDB" id="2ZL6"/>
    </source>
</evidence>
<evidence type="ECO:0007829" key="24">
    <source>
        <dbReference type="PDB" id="2ZL7"/>
    </source>
</evidence>
<evidence type="ECO:0007829" key="25">
    <source>
        <dbReference type="PDB" id="6H6Y"/>
    </source>
</evidence>
<evidence type="ECO:0007829" key="26">
    <source>
        <dbReference type="PDB" id="6H71"/>
    </source>
</evidence>
<evidence type="ECO:0007829" key="27">
    <source>
        <dbReference type="PDB" id="6H72"/>
    </source>
</evidence>
<evidence type="ECO:0007829" key="28">
    <source>
        <dbReference type="PDB" id="6OUT"/>
    </source>
</evidence>
<gene>
    <name type="ORF">ORF2</name>
</gene>
<feature type="chain" id="PRO_0000341626" description="Capsid protein VP1">
    <location>
        <begin position="1"/>
        <end position="530"/>
    </location>
</feature>
<feature type="chain" id="PRO_0000341627" description="Soluble capsid protein">
    <location>
        <begin position="228"/>
        <end position="530"/>
    </location>
</feature>
<feature type="region of interest" description="Shell domain">
    <location>
        <begin position="1"/>
        <end position="225"/>
    </location>
</feature>
<feature type="region of interest" description="Disordered" evidence="2">
    <location>
        <begin position="1"/>
        <end position="20"/>
    </location>
</feature>
<feature type="region of interest" description="Protruding domain">
    <location>
        <begin position="226"/>
        <end position="530"/>
    </location>
</feature>
<feature type="region of interest" description="P1 sub-domain 1">
    <location>
        <begin position="226"/>
        <end position="278"/>
    </location>
</feature>
<feature type="region of interest" description="P2 sub-domain">
    <location>
        <begin position="279"/>
        <end position="405"/>
    </location>
</feature>
<feature type="region of interest" description="P1 sub-domain 2">
    <location>
        <begin position="406"/>
        <end position="530"/>
    </location>
</feature>
<feature type="region of interest" description="Plays a role in binding to host histo-blood group structures antigens and in the formation of P-particles" evidence="7">
    <location>
        <begin position="523"/>
        <end position="530"/>
    </location>
</feature>
<feature type="site" description="Cleavage; by host">
    <location>
        <begin position="227"/>
        <end position="228"/>
    </location>
</feature>
<feature type="turn" evidence="28">
    <location>
        <begin position="15"/>
        <end position="17"/>
    </location>
</feature>
<feature type="turn" evidence="28">
    <location>
        <begin position="39"/>
        <end position="45"/>
    </location>
</feature>
<feature type="turn" evidence="28">
    <location>
        <begin position="54"/>
        <end position="58"/>
    </location>
</feature>
<feature type="strand" evidence="28">
    <location>
        <begin position="61"/>
        <end position="70"/>
    </location>
</feature>
<feature type="strand" evidence="28">
    <location>
        <begin position="79"/>
        <end position="84"/>
    </location>
</feature>
<feature type="helix" evidence="28">
    <location>
        <begin position="87"/>
        <end position="89"/>
    </location>
</feature>
<feature type="helix" evidence="28">
    <location>
        <begin position="91"/>
        <end position="96"/>
    </location>
</feature>
<feature type="helix" evidence="28">
    <location>
        <begin position="97"/>
        <end position="99"/>
    </location>
</feature>
<feature type="strand" evidence="28">
    <location>
        <begin position="100"/>
        <end position="104"/>
    </location>
</feature>
<feature type="strand" evidence="28">
    <location>
        <begin position="107"/>
        <end position="114"/>
    </location>
</feature>
<feature type="strand" evidence="28">
    <location>
        <begin position="117"/>
        <end position="120"/>
    </location>
</feature>
<feature type="strand" evidence="28">
    <location>
        <begin position="122"/>
        <end position="128"/>
    </location>
</feature>
<feature type="helix" evidence="28">
    <location>
        <begin position="139"/>
        <end position="142"/>
    </location>
</feature>
<feature type="strand" evidence="28">
    <location>
        <begin position="145"/>
        <end position="151"/>
    </location>
</feature>
<feature type="strand" evidence="28">
    <location>
        <begin position="158"/>
        <end position="162"/>
    </location>
</feature>
<feature type="strand" evidence="28">
    <location>
        <begin position="167"/>
        <end position="169"/>
    </location>
</feature>
<feature type="strand" evidence="28">
    <location>
        <begin position="171"/>
        <end position="173"/>
    </location>
</feature>
<feature type="strand" evidence="28">
    <location>
        <begin position="181"/>
        <end position="186"/>
    </location>
</feature>
<feature type="strand" evidence="28">
    <location>
        <begin position="202"/>
        <end position="210"/>
    </location>
</feature>
<feature type="helix" evidence="28">
    <location>
        <begin position="226"/>
        <end position="228"/>
    </location>
</feature>
<feature type="helix" evidence="24">
    <location>
        <begin position="238"/>
        <end position="240"/>
    </location>
</feature>
<feature type="strand" evidence="24">
    <location>
        <begin position="244"/>
        <end position="247"/>
    </location>
</feature>
<feature type="strand" evidence="24">
    <location>
        <begin position="252"/>
        <end position="254"/>
    </location>
</feature>
<feature type="strand" evidence="24">
    <location>
        <begin position="266"/>
        <end position="268"/>
    </location>
</feature>
<feature type="helix" evidence="24">
    <location>
        <begin position="284"/>
        <end position="286"/>
    </location>
</feature>
<feature type="strand" evidence="24">
    <location>
        <begin position="289"/>
        <end position="294"/>
    </location>
</feature>
<feature type="strand" evidence="24">
    <location>
        <begin position="296"/>
        <end position="302"/>
    </location>
</feature>
<feature type="strand" evidence="25">
    <location>
        <begin position="306"/>
        <end position="308"/>
    </location>
</feature>
<feature type="helix" evidence="24">
    <location>
        <begin position="311"/>
        <end position="313"/>
    </location>
</feature>
<feature type="strand" evidence="24">
    <location>
        <begin position="315"/>
        <end position="317"/>
    </location>
</feature>
<feature type="strand" evidence="24">
    <location>
        <begin position="325"/>
        <end position="333"/>
    </location>
</feature>
<feature type="strand" evidence="26">
    <location>
        <begin position="335"/>
        <end position="337"/>
    </location>
</feature>
<feature type="strand" evidence="24">
    <location>
        <begin position="341"/>
        <end position="345"/>
    </location>
</feature>
<feature type="strand" evidence="25">
    <location>
        <begin position="347"/>
        <end position="349"/>
    </location>
</feature>
<feature type="helix" evidence="24">
    <location>
        <begin position="354"/>
        <end position="356"/>
    </location>
</feature>
<feature type="strand" evidence="24">
    <location>
        <begin position="358"/>
        <end position="360"/>
    </location>
</feature>
<feature type="strand" evidence="24">
    <location>
        <begin position="366"/>
        <end position="377"/>
    </location>
</feature>
<feature type="strand" evidence="24">
    <location>
        <begin position="380"/>
        <end position="382"/>
    </location>
</feature>
<feature type="strand" evidence="24">
    <location>
        <begin position="396"/>
        <end position="398"/>
    </location>
</feature>
<feature type="helix" evidence="27">
    <location>
        <begin position="400"/>
        <end position="403"/>
    </location>
</feature>
<feature type="strand" evidence="24">
    <location>
        <begin position="416"/>
        <end position="425"/>
    </location>
</feature>
<feature type="strand" evidence="24">
    <location>
        <begin position="427"/>
        <end position="429"/>
    </location>
</feature>
<feature type="strand" evidence="24">
    <location>
        <begin position="431"/>
        <end position="437"/>
    </location>
</feature>
<feature type="helix" evidence="24">
    <location>
        <begin position="439"/>
        <end position="448"/>
    </location>
</feature>
<feature type="strand" evidence="24">
    <location>
        <begin position="455"/>
        <end position="462"/>
    </location>
</feature>
<feature type="turn" evidence="24">
    <location>
        <begin position="464"/>
        <end position="466"/>
    </location>
</feature>
<feature type="strand" evidence="24">
    <location>
        <begin position="469"/>
        <end position="476"/>
    </location>
</feature>
<feature type="turn" evidence="24">
    <location>
        <begin position="477"/>
        <end position="479"/>
    </location>
</feature>
<feature type="strand" evidence="24">
    <location>
        <begin position="480"/>
        <end position="483"/>
    </location>
</feature>
<feature type="turn" evidence="23">
    <location>
        <begin position="487"/>
        <end position="489"/>
    </location>
</feature>
<feature type="helix" evidence="24">
    <location>
        <begin position="492"/>
        <end position="494"/>
    </location>
</feature>
<feature type="strand" evidence="24">
    <location>
        <begin position="500"/>
        <end position="507"/>
    </location>
</feature>
<proteinExistence type="evidence at protein level"/>
<dbReference type="EMBL" id="M87661">
    <property type="protein sequence ID" value="AAB50466.2"/>
    <property type="molecule type" value="Genomic_RNA"/>
</dbReference>
<dbReference type="PIR" id="B37471">
    <property type="entry name" value="B37471"/>
</dbReference>
<dbReference type="RefSeq" id="NP_056821.2">
    <property type="nucleotide sequence ID" value="NC_001959.2"/>
</dbReference>
<dbReference type="PDB" id="1IHM">
    <property type="method" value="X-ray"/>
    <property type="resolution" value="3.40 A"/>
    <property type="chains" value="A/B/C=1-530"/>
</dbReference>
<dbReference type="PDB" id="2ZL5">
    <property type="method" value="X-ray"/>
    <property type="resolution" value="1.47 A"/>
    <property type="chains" value="A/B=225-518"/>
</dbReference>
<dbReference type="PDB" id="2ZL6">
    <property type="method" value="X-ray"/>
    <property type="resolution" value="1.43 A"/>
    <property type="chains" value="A/B=225-519"/>
</dbReference>
<dbReference type="PDB" id="2ZL7">
    <property type="method" value="X-ray"/>
    <property type="resolution" value="1.35 A"/>
    <property type="chains" value="A/B=225-519"/>
</dbReference>
<dbReference type="PDB" id="3BY1">
    <property type="method" value="X-ray"/>
    <property type="resolution" value="2.69 A"/>
    <property type="chains" value="A=218-530"/>
</dbReference>
<dbReference type="PDB" id="3BY2">
    <property type="method" value="X-ray"/>
    <property type="resolution" value="2.60 A"/>
    <property type="chains" value="A=218-522"/>
</dbReference>
<dbReference type="PDB" id="3D26">
    <property type="method" value="X-ray"/>
    <property type="resolution" value="2.30 A"/>
    <property type="chains" value="A/B=230-530"/>
</dbReference>
<dbReference type="PDB" id="5KW9">
    <property type="method" value="X-ray"/>
    <property type="resolution" value="2.30 A"/>
    <property type="chains" value="A=225-518"/>
</dbReference>
<dbReference type="PDB" id="5N7M">
    <property type="method" value="X-ray"/>
    <property type="resolution" value="1.73 A"/>
    <property type="chains" value="A/B=225-519"/>
</dbReference>
<dbReference type="PDB" id="6CRJ">
    <property type="method" value="EM"/>
    <property type="resolution" value="8.00 A"/>
    <property type="chains" value="A/B/C=10-221"/>
</dbReference>
<dbReference type="PDB" id="6H6Y">
    <property type="method" value="X-ray"/>
    <property type="resolution" value="1.58 A"/>
    <property type="chains" value="A/B/C/D=227-518"/>
</dbReference>
<dbReference type="PDB" id="6H6Z">
    <property type="method" value="X-ray"/>
    <property type="resolution" value="2.08 A"/>
    <property type="chains" value="A/B=227-518"/>
</dbReference>
<dbReference type="PDB" id="6H70">
    <property type="method" value="X-ray"/>
    <property type="resolution" value="1.83 A"/>
    <property type="chains" value="A/B=227-518"/>
</dbReference>
<dbReference type="PDB" id="6H71">
    <property type="method" value="X-ray"/>
    <property type="resolution" value="2.31 A"/>
    <property type="chains" value="A/B=227-518"/>
</dbReference>
<dbReference type="PDB" id="6H72">
    <property type="method" value="X-ray"/>
    <property type="resolution" value="2.30 A"/>
    <property type="chains" value="A/B=227-518"/>
</dbReference>
<dbReference type="PDB" id="6OUT">
    <property type="method" value="EM"/>
    <property type="resolution" value="2.60 A"/>
    <property type="chains" value="A/B/C=9-520"/>
</dbReference>
<dbReference type="PDB" id="7KJP">
    <property type="method" value="EM"/>
    <property type="resolution" value="3.86 A"/>
    <property type="chains" value="A/B/C=1-530"/>
</dbReference>
<dbReference type="PDBsum" id="1IHM"/>
<dbReference type="PDBsum" id="2ZL5"/>
<dbReference type="PDBsum" id="2ZL6"/>
<dbReference type="PDBsum" id="2ZL7"/>
<dbReference type="PDBsum" id="3BY1"/>
<dbReference type="PDBsum" id="3BY2"/>
<dbReference type="PDBsum" id="3D26"/>
<dbReference type="PDBsum" id="5KW9"/>
<dbReference type="PDBsum" id="5N7M"/>
<dbReference type="PDBsum" id="6CRJ"/>
<dbReference type="PDBsum" id="6H6Y"/>
<dbReference type="PDBsum" id="6H6Z"/>
<dbReference type="PDBsum" id="6H70"/>
<dbReference type="PDBsum" id="6H71"/>
<dbReference type="PDBsum" id="6H72"/>
<dbReference type="PDBsum" id="6OUT"/>
<dbReference type="PDBsum" id="7KJP"/>
<dbReference type="EMDB" id="EMD-20199"/>
<dbReference type="EMDB" id="EMD-20205"/>
<dbReference type="EMDB" id="EMD-22897"/>
<dbReference type="SMR" id="Q83884"/>
<dbReference type="UniLectin" id="Q83884"/>
<dbReference type="ABCD" id="Q83884">
    <property type="antibodies" value="4 sequenced antibodies"/>
</dbReference>
<dbReference type="GeneID" id="1491972"/>
<dbReference type="KEGG" id="vg:1491972"/>
<dbReference type="EvolutionaryTrace" id="Q83884"/>
<dbReference type="Proteomes" id="UP000000826">
    <property type="component" value="Segment"/>
</dbReference>
<dbReference type="GO" id="GO:0030430">
    <property type="term" value="C:host cell cytoplasm"/>
    <property type="evidence" value="ECO:0007669"/>
    <property type="project" value="UniProtKB-SubCell"/>
</dbReference>
<dbReference type="GO" id="GO:0039617">
    <property type="term" value="C:T=3 icosahedral viral capsid"/>
    <property type="evidence" value="ECO:0007669"/>
    <property type="project" value="UniProtKB-KW"/>
</dbReference>
<dbReference type="GO" id="GO:0042802">
    <property type="term" value="F:identical protein binding"/>
    <property type="evidence" value="ECO:0000353"/>
    <property type="project" value="IntAct"/>
</dbReference>
<dbReference type="CDD" id="cd00205">
    <property type="entry name" value="rhv_like"/>
    <property type="match status" value="1"/>
</dbReference>
<dbReference type="FunFam" id="2.60.120.20:FF:000008">
    <property type="entry name" value="Capsid protein VP1"/>
    <property type="match status" value="1"/>
</dbReference>
<dbReference type="Gene3D" id="2.60.120.20">
    <property type="match status" value="1"/>
</dbReference>
<dbReference type="Gene3D" id="2.40.30.120">
    <property type="entry name" value="Positive stranded ssRNA viruses"/>
    <property type="match status" value="1"/>
</dbReference>
<dbReference type="Gene3D" id="2.40.510.10">
    <property type="entry name" value="Positive stranded ssRNA viruses"/>
    <property type="match status" value="1"/>
</dbReference>
<dbReference type="InterPro" id="IPR004005">
    <property type="entry name" value="Calicivirus_coat"/>
</dbReference>
<dbReference type="InterPro" id="IPR013643">
    <property type="entry name" value="Calicivirus_coat_C"/>
</dbReference>
<dbReference type="InterPro" id="IPR033703">
    <property type="entry name" value="Rhv-like"/>
</dbReference>
<dbReference type="InterPro" id="IPR029053">
    <property type="entry name" value="Viral_coat"/>
</dbReference>
<dbReference type="Pfam" id="PF00915">
    <property type="entry name" value="Calici_coat"/>
    <property type="match status" value="1"/>
</dbReference>
<dbReference type="Pfam" id="PF08435">
    <property type="entry name" value="Calici_coat_C"/>
    <property type="match status" value="1"/>
</dbReference>
<dbReference type="SUPFAM" id="SSF88633">
    <property type="entry name" value="Positive stranded ssRNA viruses"/>
    <property type="match status" value="1"/>
</dbReference>
<sequence>MMMASKDATSSVDGASGAGQLVPEVNASDPLAMDPVAGSSTAVATAGQVNPIDPWIINNFVQAPQGEFTISPNNTPGDVLFDLSLGPHLNPFLLHLSQMYNGWVGNMRVRIMLAGNAFTAGKIIVSCIPPGFGSHNLTIAQATLFPHVIADVRTLDPIEVPLEDVRNVLFHNNDRNQQTMRLVCMLYTPLRTGGGTGDSFVVAGRVMTCPSPDFNFLFLVPPTVEQKTRPFTLPNLPLSSLSNSRAPLPISSMGISPDNVQSVQFQNGRCTLDGRLVGTTPVSLSHVAKIRGTSNGTVINLTELDGTPFHPFEGPAPIGFPDLGGCDWHINMTQFGHSSQTQYDVDTTPDTFVPHLGSIQANGIGSGNYVGVLSWISPPSHPSGSQVDLWKIPNYGSSITEATHLAPSVYPPGFGEVLVFFMSKMPGPGAYNLPCLLPQEYISHLASEQAPTVGEAALLHYVDPDTGRNLGEFKAYPDGFLTCVPNGASSGPQQLPINGVFVFVSWVSRFYQLKPVGTASSARGRLGLRR</sequence>
<keyword id="KW-0002">3D-structure</keyword>
<keyword id="KW-0167">Capsid protein</keyword>
<keyword id="KW-1035">Host cytoplasm</keyword>
<keyword id="KW-1185">Reference proteome</keyword>
<keyword id="KW-1142">T=3 icosahedral capsid protein</keyword>
<keyword id="KW-0946">Virion</keyword>
<reference key="1">
    <citation type="journal article" date="1993" name="Virology">
        <title>Sequence and genomic organization of Norwalk virus.</title>
        <authorList>
            <person name="Jiang X."/>
            <person name="Wang M."/>
            <person name="Wang K."/>
            <person name="Estes M.K."/>
        </authorList>
    </citation>
    <scope>NUCLEOTIDE SEQUENCE [GENOMIC RNA]</scope>
</reference>
<reference key="2">
    <citation type="journal article" date="1995" name="J. Virol.">
        <title>Specific proteolytic cleavage of recombinant Norwalk virus capsid protein.</title>
        <authorList>
            <person name="Hardy M.E."/>
            <person name="White L.J."/>
            <person name="Ball J.M."/>
            <person name="Estes M.K."/>
        </authorList>
    </citation>
    <scope>PROTEOLYTIC CLEAVAGE</scope>
</reference>
<reference key="3">
    <citation type="journal article" date="1997" name="J. Virol.">
        <title>Biochemical characterization of a smaller form of recombinant Norwalk virus capsids assembled in insect cells.</title>
        <authorList>
            <person name="White L.J."/>
            <person name="Hardy M.E."/>
            <person name="Estes M.K."/>
        </authorList>
    </citation>
    <scope>SUBUNIT</scope>
    <scope>FUNCTION</scope>
</reference>
<reference key="4">
    <citation type="journal article" date="2002" name="Gastroenterology">
        <title>Norwalk virus binds to histo-blood group antigens present on gastroduodenal epithelial cells of secretor individuals.</title>
        <authorList>
            <person name="Marionneau S."/>
            <person name="Ruvoen N."/>
            <person name="Le Moullac-Vaidye B."/>
            <person name="Clement M."/>
            <person name="Cailleau-Thomas A."/>
            <person name="Ruiz-Palacois G."/>
            <person name="Huang P."/>
            <person name="Jiang X."/>
            <person name="Le Pendu J."/>
        </authorList>
    </citation>
    <scope>FUNCTION</scope>
    <scope>INTERACTION WITH HOST HISTO-BLOOD GROUP ANTIGENS</scope>
</reference>
<reference key="5">
    <citation type="journal article" date="2003" name="J. Virol.">
        <title>The 3' end of Norwalk virus mRNA contains determinants that regulate the expression and stability of the viral capsid protein VP1: a novel function for the VP2 protein.</title>
        <authorList>
            <person name="Bertolotti-Ciarlet A."/>
            <person name="Crawford S.E."/>
            <person name="Hutson A.M."/>
            <person name="Estes M.K."/>
        </authorList>
    </citation>
    <scope>STABILIZATION BY VP2</scope>
</reference>
<reference key="6">
    <citation type="journal article" date="2003" name="J. Infect. Dis.">
        <title>Noroviruses bind to human ABO, Lewis, and secretor histo-blood group antigens: identification of 4 distinct strain-specific patterns.</title>
        <authorList>
            <person name="Huang P."/>
            <person name="Farkas T."/>
            <person name="Marionneau S."/>
            <person name="Zhong W."/>
            <person name="Ruvoen-Clouet N."/>
            <person name="Morrow A.L."/>
            <person name="Altaye M."/>
            <person name="Pickering L.K."/>
            <person name="Newburg D.S."/>
            <person name="LePendu J."/>
            <person name="Jiang X."/>
        </authorList>
    </citation>
    <scope>FUNCTION</scope>
    <scope>INTERACTION WITH HOST HISTO-BLOOD GROUP ANTIGENS</scope>
</reference>
<reference key="7">
    <citation type="journal article" date="2005" name="FEMS Microbiol. Lett.">
        <title>Norovirus protein structure and function.</title>
        <authorList>
            <person name="Hardy M.E."/>
        </authorList>
    </citation>
    <scope>REVIEW</scope>
</reference>
<reference key="8">
    <citation type="journal article" date="2006" name="J. Virol.">
        <title>C-terminal arginine cluster is essential for receptor binding of norovirus capsid protein.</title>
        <authorList>
            <person name="Tan M."/>
            <person name="Meller J."/>
            <person name="Jiang X."/>
        </authorList>
    </citation>
    <scope>FUNCTION</scope>
    <scope>INTERACTION WITH HOST HISTO-BLOOD GROUP ANTIGENS</scope>
    <scope>SUBUNIT</scope>
</reference>
<reference key="9">
    <citation type="journal article" date="2005" name="J. Virol.">
        <title>The p domain of norovirus capsid protein forms a subviral particle that binds to histo-blood group antigen receptors.</title>
        <authorList>
            <person name="Tan M."/>
            <person name="Jiang X."/>
        </authorList>
    </citation>
    <scope>SUBUNIT</scope>
    <scope>DOMAIN</scope>
    <scope>INTERACTION WITH HOST HISTO-BLOOD GROUP ANTIGENS</scope>
</reference>
<reference evidence="13" key="10">
    <citation type="journal article" date="1999" name="Science">
        <title>X-ray crystallographic structure of the Norwalk virus capsid.</title>
        <authorList>
            <person name="Prasad B.V.V."/>
            <person name="Hardy M.E."/>
            <person name="Dokland T."/>
            <person name="Bella J."/>
            <person name="Rossmann M.G."/>
            <person name="Estes M.K."/>
        </authorList>
    </citation>
    <scope>X-RAY CRYSTALLOGRAPHY (3.4 ANGSTROMS)</scope>
    <scope>FUNCTION</scope>
    <scope>SUBUNIT</scope>
    <scope>DOMAIN</scope>
</reference>
<reference evidence="17 18 19" key="11">
    <citation type="journal article" date="2008" name="J. Virol.">
        <title>Structural basis for the receptor binding specificity of Norwalk virus.</title>
        <authorList>
            <person name="Bu W."/>
            <person name="Mamedova A."/>
            <person name="Tan M."/>
            <person name="Xia M."/>
            <person name="Jiang X."/>
            <person name="Hegde R.S."/>
        </authorList>
    </citation>
    <scope>X-RAY CRYSTALLOGRAPHY (2.30 ANGSTROMS) OF 230-530 IN COMPLEX WITH A TRISACCHARIDE</scope>
    <scope>SUBUNIT</scope>
</reference>
<reference evidence="14 15 16" key="12">
    <citation type="journal article" date="2008" name="Proc. Natl. Acad. Sci. U.S.A.">
        <title>Atomic resolution structural characterization of recognition of histo-blood group antigens by Norwalk virus.</title>
        <authorList>
            <person name="Choi J.M."/>
            <person name="Hutson A.M."/>
            <person name="Estes M.K."/>
            <person name="Prasad B.V."/>
        </authorList>
    </citation>
    <scope>X-RAY CRYSTALLOGRAPHY (1.35 ANGSTROMS) OF 225-519 IN COMPLEX WITH BETA-D-GALACTOSE</scope>
    <scope>SUBUNIT</scope>
</reference>
<reference evidence="20" key="13">
    <citation type="journal article" date="2016" name="Proc. Natl. Acad. Sci. U.S.A.">
        <title>Structural basis for norovirus neutralization by an HBGA blocking human IgA antibody.</title>
        <authorList>
            <person name="Shanker S."/>
            <person name="Czako R."/>
            <person name="Sapparapu G."/>
            <person name="Alvarado G."/>
            <person name="Viskovska M."/>
            <person name="Sankaran B."/>
            <person name="Atmar R.L."/>
            <person name="Crowe J.E. Jr."/>
            <person name="Estes M.K."/>
            <person name="Prasad B.V."/>
        </authorList>
    </citation>
    <scope>X-RAY CRYSTALLOGRAPHY (2.30 ANGSTROMS) OF 225-518</scope>
</reference>
<reference evidence="21" key="14">
    <citation type="journal article" date="2017" name="Virology">
        <title>Human norovirus inhibition by a human milk oligosaccharide.</title>
        <authorList>
            <person name="Koromyslova A."/>
            <person name="Tripathi S."/>
            <person name="Morozov V."/>
            <person name="Schroten H."/>
            <person name="Hansman G.S."/>
        </authorList>
    </citation>
    <scope>X-RAY CRYSTALLOGRAPHY (1.73 ANGSTROMS) OF 225-519</scope>
</reference>
<reference evidence="22" key="15">
    <citation type="journal article" date="2019" name="Proc. Natl. Acad. Sci. U.S.A.">
        <title>High-resolution cryo-EM structures of outbreak strain human norovirus shells reveal size variations.</title>
        <authorList>
            <person name="Jung J."/>
            <person name="Grant T."/>
            <person name="Thomas D.R."/>
            <person name="Diehnelt C.W."/>
            <person name="Grigorieff N."/>
            <person name="Joshua-Tor L."/>
        </authorList>
    </citation>
    <scope>STRUCTURE BY ELECTRON MICROSCOPY (2.60 ANGSTROMS)</scope>
    <scope>FUNCTION</scope>
</reference>